<accession>Q1CIG5</accession>
<accession>C4GTJ0</accession>
<feature type="chain" id="PRO_0000258788" description="Large ribosomal subunit protein bL35">
    <location>
        <begin position="1"/>
        <end position="65"/>
    </location>
</feature>
<name>RL35_YERPN</name>
<organism>
    <name type="scientific">Yersinia pestis bv. Antiqua (strain Nepal516)</name>
    <dbReference type="NCBI Taxonomy" id="377628"/>
    <lineage>
        <taxon>Bacteria</taxon>
        <taxon>Pseudomonadati</taxon>
        <taxon>Pseudomonadota</taxon>
        <taxon>Gammaproteobacteria</taxon>
        <taxon>Enterobacterales</taxon>
        <taxon>Yersiniaceae</taxon>
        <taxon>Yersinia</taxon>
    </lineage>
</organism>
<comment type="similarity">
    <text evidence="1">Belongs to the bacterial ribosomal protein bL35 family.</text>
</comment>
<dbReference type="EMBL" id="CP000305">
    <property type="protein sequence ID" value="ABG18215.1"/>
    <property type="molecule type" value="Genomic_DNA"/>
</dbReference>
<dbReference type="EMBL" id="ACNQ01000010">
    <property type="protein sequence ID" value="EEO76791.1"/>
    <property type="molecule type" value="Genomic_DNA"/>
</dbReference>
<dbReference type="RefSeq" id="WP_002211834.1">
    <property type="nucleotide sequence ID" value="NZ_ACNQ01000010.1"/>
</dbReference>
<dbReference type="SMR" id="Q1CIG5"/>
<dbReference type="GeneID" id="97456073"/>
<dbReference type="KEGG" id="ypn:YPN_1886"/>
<dbReference type="HOGENOM" id="CLU_169643_1_1_6"/>
<dbReference type="Proteomes" id="UP000008936">
    <property type="component" value="Chromosome"/>
</dbReference>
<dbReference type="GO" id="GO:0022625">
    <property type="term" value="C:cytosolic large ribosomal subunit"/>
    <property type="evidence" value="ECO:0007669"/>
    <property type="project" value="TreeGrafter"/>
</dbReference>
<dbReference type="GO" id="GO:0003735">
    <property type="term" value="F:structural constituent of ribosome"/>
    <property type="evidence" value="ECO:0007669"/>
    <property type="project" value="InterPro"/>
</dbReference>
<dbReference type="GO" id="GO:0006412">
    <property type="term" value="P:translation"/>
    <property type="evidence" value="ECO:0007669"/>
    <property type="project" value="UniProtKB-UniRule"/>
</dbReference>
<dbReference type="FunFam" id="4.10.410.60:FF:000001">
    <property type="entry name" value="50S ribosomal protein L35"/>
    <property type="match status" value="1"/>
</dbReference>
<dbReference type="Gene3D" id="4.10.410.60">
    <property type="match status" value="1"/>
</dbReference>
<dbReference type="HAMAP" id="MF_00514">
    <property type="entry name" value="Ribosomal_bL35"/>
    <property type="match status" value="1"/>
</dbReference>
<dbReference type="InterPro" id="IPR001706">
    <property type="entry name" value="Ribosomal_bL35"/>
</dbReference>
<dbReference type="InterPro" id="IPR021137">
    <property type="entry name" value="Ribosomal_bL35-like"/>
</dbReference>
<dbReference type="InterPro" id="IPR018265">
    <property type="entry name" value="Ribosomal_bL35_CS"/>
</dbReference>
<dbReference type="InterPro" id="IPR037229">
    <property type="entry name" value="Ribosomal_bL35_sf"/>
</dbReference>
<dbReference type="NCBIfam" id="TIGR00001">
    <property type="entry name" value="rpmI_bact"/>
    <property type="match status" value="1"/>
</dbReference>
<dbReference type="PANTHER" id="PTHR33343">
    <property type="entry name" value="54S RIBOSOMAL PROTEIN BL35M"/>
    <property type="match status" value="1"/>
</dbReference>
<dbReference type="PANTHER" id="PTHR33343:SF1">
    <property type="entry name" value="LARGE RIBOSOMAL SUBUNIT PROTEIN BL35M"/>
    <property type="match status" value="1"/>
</dbReference>
<dbReference type="Pfam" id="PF01632">
    <property type="entry name" value="Ribosomal_L35p"/>
    <property type="match status" value="1"/>
</dbReference>
<dbReference type="PRINTS" id="PR00064">
    <property type="entry name" value="RIBOSOMALL35"/>
</dbReference>
<dbReference type="SUPFAM" id="SSF143034">
    <property type="entry name" value="L35p-like"/>
    <property type="match status" value="1"/>
</dbReference>
<dbReference type="PROSITE" id="PS00936">
    <property type="entry name" value="RIBOSOMAL_L35"/>
    <property type="match status" value="1"/>
</dbReference>
<sequence length="65" mass="7319">MPKIKTVRGAAKRFKKTANGGFKRKHANLRHILTKKATKRKRHLRPKGLVSKNDLGLVVACLPYA</sequence>
<reference key="1">
    <citation type="journal article" date="2006" name="J. Bacteriol.">
        <title>Complete genome sequence of Yersinia pestis strains Antiqua and Nepal516: evidence of gene reduction in an emerging pathogen.</title>
        <authorList>
            <person name="Chain P.S.G."/>
            <person name="Hu P."/>
            <person name="Malfatti S.A."/>
            <person name="Radnedge L."/>
            <person name="Larimer F."/>
            <person name="Vergez L.M."/>
            <person name="Worsham P."/>
            <person name="Chu M.C."/>
            <person name="Andersen G.L."/>
        </authorList>
    </citation>
    <scope>NUCLEOTIDE SEQUENCE [LARGE SCALE GENOMIC DNA]</scope>
    <source>
        <strain>Nepal516</strain>
    </source>
</reference>
<reference key="2">
    <citation type="submission" date="2009-04" db="EMBL/GenBank/DDBJ databases">
        <title>Yersinia pestis Nepal516A whole genome shotgun sequencing project.</title>
        <authorList>
            <person name="Plunkett G. III"/>
            <person name="Anderson B.D."/>
            <person name="Baumler D.J."/>
            <person name="Burland V."/>
            <person name="Cabot E.L."/>
            <person name="Glasner J.D."/>
            <person name="Mau B."/>
            <person name="Neeno-Eckwall E."/>
            <person name="Perna N.T."/>
            <person name="Munk A.C."/>
            <person name="Tapia R."/>
            <person name="Green L.D."/>
            <person name="Rogers Y.C."/>
            <person name="Detter J.C."/>
            <person name="Bruce D.C."/>
            <person name="Brettin T.S."/>
        </authorList>
    </citation>
    <scope>NUCLEOTIDE SEQUENCE [LARGE SCALE GENOMIC DNA]</scope>
    <source>
        <strain>Nepal516</strain>
    </source>
</reference>
<protein>
    <recommendedName>
        <fullName evidence="1">Large ribosomal subunit protein bL35</fullName>
    </recommendedName>
    <alternativeName>
        <fullName evidence="2">50S ribosomal protein L35</fullName>
    </alternativeName>
</protein>
<gene>
    <name evidence="1" type="primary">rpmI</name>
    <name type="ordered locus">YPN_1886</name>
    <name type="ORF">YP516_2098</name>
</gene>
<keyword id="KW-0687">Ribonucleoprotein</keyword>
<keyword id="KW-0689">Ribosomal protein</keyword>
<proteinExistence type="inferred from homology"/>
<evidence type="ECO:0000255" key="1">
    <source>
        <dbReference type="HAMAP-Rule" id="MF_00514"/>
    </source>
</evidence>
<evidence type="ECO:0000305" key="2"/>